<dbReference type="EC" id="6.3.1.21" evidence="1"/>
<dbReference type="EMBL" id="CP000111">
    <property type="protein sequence ID" value="ABB50074.1"/>
    <property type="molecule type" value="Genomic_DNA"/>
</dbReference>
<dbReference type="RefSeq" id="WP_011376565.1">
    <property type="nucleotide sequence ID" value="NC_007577.1"/>
</dbReference>
<dbReference type="SMR" id="Q31AM1"/>
<dbReference type="STRING" id="74546.PMT9312_1014"/>
<dbReference type="KEGG" id="pmi:PMT9312_1014"/>
<dbReference type="eggNOG" id="COG0027">
    <property type="taxonomic scope" value="Bacteria"/>
</dbReference>
<dbReference type="HOGENOM" id="CLU_011534_1_3_3"/>
<dbReference type="OrthoDB" id="9804625at2"/>
<dbReference type="UniPathway" id="UPA00074">
    <property type="reaction ID" value="UER00127"/>
</dbReference>
<dbReference type="Proteomes" id="UP000002715">
    <property type="component" value="Chromosome"/>
</dbReference>
<dbReference type="GO" id="GO:0005829">
    <property type="term" value="C:cytosol"/>
    <property type="evidence" value="ECO:0007669"/>
    <property type="project" value="TreeGrafter"/>
</dbReference>
<dbReference type="GO" id="GO:0005524">
    <property type="term" value="F:ATP binding"/>
    <property type="evidence" value="ECO:0007669"/>
    <property type="project" value="UniProtKB-UniRule"/>
</dbReference>
<dbReference type="GO" id="GO:0000287">
    <property type="term" value="F:magnesium ion binding"/>
    <property type="evidence" value="ECO:0007669"/>
    <property type="project" value="InterPro"/>
</dbReference>
<dbReference type="GO" id="GO:0043815">
    <property type="term" value="F:phosphoribosylglycinamide formyltransferase 2 activity"/>
    <property type="evidence" value="ECO:0007669"/>
    <property type="project" value="UniProtKB-UniRule"/>
</dbReference>
<dbReference type="GO" id="GO:0004644">
    <property type="term" value="F:phosphoribosylglycinamide formyltransferase activity"/>
    <property type="evidence" value="ECO:0007669"/>
    <property type="project" value="InterPro"/>
</dbReference>
<dbReference type="GO" id="GO:0006189">
    <property type="term" value="P:'de novo' IMP biosynthetic process"/>
    <property type="evidence" value="ECO:0007669"/>
    <property type="project" value="UniProtKB-UniRule"/>
</dbReference>
<dbReference type="Gene3D" id="3.40.50.20">
    <property type="match status" value="1"/>
</dbReference>
<dbReference type="Gene3D" id="3.30.1490.20">
    <property type="entry name" value="ATP-grasp fold, A domain"/>
    <property type="match status" value="1"/>
</dbReference>
<dbReference type="Gene3D" id="3.30.470.20">
    <property type="entry name" value="ATP-grasp fold, B domain"/>
    <property type="match status" value="1"/>
</dbReference>
<dbReference type="HAMAP" id="MF_01643">
    <property type="entry name" value="PurT"/>
    <property type="match status" value="1"/>
</dbReference>
<dbReference type="InterPro" id="IPR011761">
    <property type="entry name" value="ATP-grasp"/>
</dbReference>
<dbReference type="InterPro" id="IPR003135">
    <property type="entry name" value="ATP-grasp_carboxylate-amine"/>
</dbReference>
<dbReference type="InterPro" id="IPR013815">
    <property type="entry name" value="ATP_grasp_subdomain_1"/>
</dbReference>
<dbReference type="InterPro" id="IPR016185">
    <property type="entry name" value="PreATP-grasp_dom_sf"/>
</dbReference>
<dbReference type="InterPro" id="IPR005862">
    <property type="entry name" value="PurT"/>
</dbReference>
<dbReference type="InterPro" id="IPR054350">
    <property type="entry name" value="PurT/PurK_preATP-grasp"/>
</dbReference>
<dbReference type="InterPro" id="IPR048740">
    <property type="entry name" value="PurT_C"/>
</dbReference>
<dbReference type="InterPro" id="IPR011054">
    <property type="entry name" value="Rudment_hybrid_motif"/>
</dbReference>
<dbReference type="NCBIfam" id="NF006766">
    <property type="entry name" value="PRK09288.1"/>
    <property type="match status" value="1"/>
</dbReference>
<dbReference type="NCBIfam" id="TIGR01142">
    <property type="entry name" value="purT"/>
    <property type="match status" value="1"/>
</dbReference>
<dbReference type="PANTHER" id="PTHR43055">
    <property type="entry name" value="FORMATE-DEPENDENT PHOSPHORIBOSYLGLYCINAMIDE FORMYLTRANSFERASE"/>
    <property type="match status" value="1"/>
</dbReference>
<dbReference type="PANTHER" id="PTHR43055:SF1">
    <property type="entry name" value="FORMATE-DEPENDENT PHOSPHORIBOSYLGLYCINAMIDE FORMYLTRANSFERASE"/>
    <property type="match status" value="1"/>
</dbReference>
<dbReference type="Pfam" id="PF02222">
    <property type="entry name" value="ATP-grasp"/>
    <property type="match status" value="1"/>
</dbReference>
<dbReference type="Pfam" id="PF21244">
    <property type="entry name" value="PurT_C"/>
    <property type="match status" value="1"/>
</dbReference>
<dbReference type="Pfam" id="PF22660">
    <property type="entry name" value="RS_preATP-grasp-like"/>
    <property type="match status" value="1"/>
</dbReference>
<dbReference type="SUPFAM" id="SSF56059">
    <property type="entry name" value="Glutathione synthetase ATP-binding domain-like"/>
    <property type="match status" value="1"/>
</dbReference>
<dbReference type="SUPFAM" id="SSF52440">
    <property type="entry name" value="PreATP-grasp domain"/>
    <property type="match status" value="1"/>
</dbReference>
<dbReference type="SUPFAM" id="SSF51246">
    <property type="entry name" value="Rudiment single hybrid motif"/>
    <property type="match status" value="1"/>
</dbReference>
<dbReference type="PROSITE" id="PS50975">
    <property type="entry name" value="ATP_GRASP"/>
    <property type="match status" value="1"/>
</dbReference>
<keyword id="KW-0067">ATP-binding</keyword>
<keyword id="KW-0436">Ligase</keyword>
<keyword id="KW-0460">Magnesium</keyword>
<keyword id="KW-0479">Metal-binding</keyword>
<keyword id="KW-0547">Nucleotide-binding</keyword>
<keyword id="KW-0658">Purine biosynthesis</keyword>
<sequence length="391" mass="44028">MNDSVFSKKRILLLGSGELGKELVIESKRLGLEVIAIDRYEKAPAMQVADYSKVIDMGDKNILKNSIKEFTPDFVVPEIEALSIEALKELEDEGFKIVPNARTVEITMNRDKIRELVSRDLKIKTANYDYIYKFEDLEKKADEIGFPLLLKPLMSSSGKGQSLVGSKNDLNQAWSQAQANSRGQVKGVIIEEFINFDFEFTLLTVRKNNGENIFCLPIGHLQSNGDYQCSWHPLEINQSLISEAKKMTTKILNNLNGSGLYGVEFFVKENEVIFSELSPRPHDTGMVTLVSQNINEFELHLRAFLNLPIPHINLIEPSATRVILSDQEHMNPIYEGLNEALEVENTKVLIFGKPISRKGRRMGVVLSSNSDINLARKNADEAARKIKVSSK</sequence>
<proteinExistence type="inferred from homology"/>
<protein>
    <recommendedName>
        <fullName evidence="1">Formate-dependent phosphoribosylglycinamide formyltransferase</fullName>
        <ecNumber evidence="1">6.3.1.21</ecNumber>
    </recommendedName>
    <alternativeName>
        <fullName evidence="1">5'-phosphoribosylglycinamide transformylase 2</fullName>
    </alternativeName>
    <alternativeName>
        <fullName evidence="1">Formate-dependent GAR transformylase</fullName>
    </alternativeName>
    <alternativeName>
        <fullName evidence="1">GAR transformylase 2</fullName>
        <shortName evidence="1">GART 2</shortName>
    </alternativeName>
    <alternativeName>
        <fullName evidence="1">Non-folate glycinamide ribonucleotide transformylase</fullName>
    </alternativeName>
    <alternativeName>
        <fullName evidence="1">Phosphoribosylglycinamide formyltransferase 2</fullName>
    </alternativeName>
</protein>
<evidence type="ECO:0000255" key="1">
    <source>
        <dbReference type="HAMAP-Rule" id="MF_01643"/>
    </source>
</evidence>
<gene>
    <name evidence="1" type="primary">purT</name>
    <name type="ordered locus">PMT9312_1014</name>
</gene>
<organism>
    <name type="scientific">Prochlorococcus marinus (strain MIT 9312)</name>
    <dbReference type="NCBI Taxonomy" id="74546"/>
    <lineage>
        <taxon>Bacteria</taxon>
        <taxon>Bacillati</taxon>
        <taxon>Cyanobacteriota</taxon>
        <taxon>Cyanophyceae</taxon>
        <taxon>Synechococcales</taxon>
        <taxon>Prochlorococcaceae</taxon>
        <taxon>Prochlorococcus</taxon>
    </lineage>
</organism>
<reference key="1">
    <citation type="journal article" date="2006" name="Science">
        <title>Genomic islands and the ecology and evolution of Prochlorococcus.</title>
        <authorList>
            <person name="Coleman M.L."/>
            <person name="Sullivan M.B."/>
            <person name="Martiny A.C."/>
            <person name="Steglich C."/>
            <person name="Barry K."/>
            <person name="Delong E.F."/>
            <person name="Chisholm S.W."/>
        </authorList>
    </citation>
    <scope>NUCLEOTIDE SEQUENCE [LARGE SCALE GENOMIC DNA]</scope>
    <source>
        <strain>MIT 9312</strain>
    </source>
</reference>
<feature type="chain" id="PRO_0000319202" description="Formate-dependent phosphoribosylglycinamide formyltransferase">
    <location>
        <begin position="1"/>
        <end position="391"/>
    </location>
</feature>
<feature type="domain" description="ATP-grasp" evidence="1">
    <location>
        <begin position="115"/>
        <end position="305"/>
    </location>
</feature>
<feature type="binding site" evidence="1">
    <location>
        <begin position="18"/>
        <end position="19"/>
    </location>
    <ligand>
        <name>N(1)-(5-phospho-beta-D-ribosyl)glycinamide</name>
        <dbReference type="ChEBI" id="CHEBI:143788"/>
    </ligand>
</feature>
<feature type="binding site" evidence="1">
    <location>
        <position position="78"/>
    </location>
    <ligand>
        <name>N(1)-(5-phospho-beta-D-ribosyl)glycinamide</name>
        <dbReference type="ChEBI" id="CHEBI:143788"/>
    </ligand>
</feature>
<feature type="binding site" evidence="1">
    <location>
        <position position="110"/>
    </location>
    <ligand>
        <name>ATP</name>
        <dbReference type="ChEBI" id="CHEBI:30616"/>
    </ligand>
</feature>
<feature type="binding site" evidence="1">
    <location>
        <position position="151"/>
    </location>
    <ligand>
        <name>ATP</name>
        <dbReference type="ChEBI" id="CHEBI:30616"/>
    </ligand>
</feature>
<feature type="binding site" evidence="1">
    <location>
        <begin position="156"/>
        <end position="161"/>
    </location>
    <ligand>
        <name>ATP</name>
        <dbReference type="ChEBI" id="CHEBI:30616"/>
    </ligand>
</feature>
<feature type="binding site" evidence="1">
    <location>
        <begin position="191"/>
        <end position="194"/>
    </location>
    <ligand>
        <name>ATP</name>
        <dbReference type="ChEBI" id="CHEBI:30616"/>
    </ligand>
</feature>
<feature type="binding site" evidence="1">
    <location>
        <position position="199"/>
    </location>
    <ligand>
        <name>ATP</name>
        <dbReference type="ChEBI" id="CHEBI:30616"/>
    </ligand>
</feature>
<feature type="binding site" evidence="1">
    <location>
        <position position="264"/>
    </location>
    <ligand>
        <name>Mg(2+)</name>
        <dbReference type="ChEBI" id="CHEBI:18420"/>
    </ligand>
</feature>
<feature type="binding site" evidence="1">
    <location>
        <position position="276"/>
    </location>
    <ligand>
        <name>Mg(2+)</name>
        <dbReference type="ChEBI" id="CHEBI:18420"/>
    </ligand>
</feature>
<feature type="binding site" evidence="1">
    <location>
        <position position="283"/>
    </location>
    <ligand>
        <name>N(1)-(5-phospho-beta-D-ribosyl)glycinamide</name>
        <dbReference type="ChEBI" id="CHEBI:143788"/>
    </ligand>
</feature>
<feature type="binding site" evidence="1">
    <location>
        <position position="353"/>
    </location>
    <ligand>
        <name>N(1)-(5-phospho-beta-D-ribosyl)glycinamide</name>
        <dbReference type="ChEBI" id="CHEBI:143788"/>
    </ligand>
</feature>
<feature type="binding site" evidence="1">
    <location>
        <begin position="360"/>
        <end position="361"/>
    </location>
    <ligand>
        <name>N(1)-(5-phospho-beta-D-ribosyl)glycinamide</name>
        <dbReference type="ChEBI" id="CHEBI:143788"/>
    </ligand>
</feature>
<name>PURT_PROM9</name>
<comment type="function">
    <text evidence="1">Involved in the de novo purine biosynthesis. Catalyzes the transfer of formate to 5-phospho-ribosyl-glycinamide (GAR), producing 5-phospho-ribosyl-N-formylglycinamide (FGAR). Formate is provided by PurU via hydrolysis of 10-formyl-tetrahydrofolate.</text>
</comment>
<comment type="catalytic activity">
    <reaction evidence="1">
        <text>N(1)-(5-phospho-beta-D-ribosyl)glycinamide + formate + ATP = N(2)-formyl-N(1)-(5-phospho-beta-D-ribosyl)glycinamide + ADP + phosphate + H(+)</text>
        <dbReference type="Rhea" id="RHEA:24829"/>
        <dbReference type="ChEBI" id="CHEBI:15378"/>
        <dbReference type="ChEBI" id="CHEBI:15740"/>
        <dbReference type="ChEBI" id="CHEBI:30616"/>
        <dbReference type="ChEBI" id="CHEBI:43474"/>
        <dbReference type="ChEBI" id="CHEBI:143788"/>
        <dbReference type="ChEBI" id="CHEBI:147286"/>
        <dbReference type="ChEBI" id="CHEBI:456216"/>
        <dbReference type="EC" id="6.3.1.21"/>
    </reaction>
    <physiologicalReaction direction="left-to-right" evidence="1">
        <dbReference type="Rhea" id="RHEA:24830"/>
    </physiologicalReaction>
</comment>
<comment type="pathway">
    <text evidence="1">Purine metabolism; IMP biosynthesis via de novo pathway; N(2)-formyl-N(1)-(5-phospho-D-ribosyl)glycinamide from N(1)-(5-phospho-D-ribosyl)glycinamide (formate route): step 1/1.</text>
</comment>
<comment type="subunit">
    <text evidence="1">Homodimer.</text>
</comment>
<comment type="similarity">
    <text evidence="1">Belongs to the PurK/PurT family.</text>
</comment>
<accession>Q31AM1</accession>